<evidence type="ECO:0000305" key="1"/>
<feature type="chain" id="PRO_0000158242" description="Imidazoleglycerol-phosphate dehydratase">
    <location>
        <begin position="1"/>
        <end position="452"/>
    </location>
</feature>
<feature type="region of interest" description="Unknown activity">
    <location>
        <begin position="1"/>
        <end position="233"/>
    </location>
</feature>
<feature type="region of interest" description="Imidazoleglycerol-phosphate dehydratase">
    <location>
        <begin position="234"/>
        <end position="452"/>
    </location>
</feature>
<sequence length="452" mass="47963">MASPVQALLLDMDGVMAEVSQSYRQAIIDTARHFGVSVTHEDIDHTKLAGNANNDWQLTHRLVVDGLNGASSAPTLEAVTAQFEALYQGVGNTLGLCELETLLTPKGLLRELHRRQPKGMAVVTGRPRKDCAKFLTTHGIEDLFPVQIWLEDCPPKPSPEPILLALKALGVEACHAAMVGDTVDDIIAGRKAGAVAYGVLTPQTYAKSILEQTPAAIGKVLEQVGASVVLTPGLGELLDLVPAVPTASKAPTVNGKSGVREANISRVTKETSISVKLSLDGTGKSKVSSGIGFLDHMLTALAKHSRFDLELDCKGDTWIDDHHTTEDCALTLGEAFDVALGDRAGIARFGSACVPLDEALSRAIVDISSRAHSEINLQLVRPSVGELSSEMITHFFESFASAALXTLHVDVLRGRNDHHRAEASFKALAVALRTAVKHDATAGVPSTKGVLA</sequence>
<name>HIS7_PHYNI</name>
<gene>
    <name type="primary">HIS3</name>
</gene>
<proteinExistence type="inferred from homology"/>
<organism>
    <name type="scientific">Phytophthora nicotianae</name>
    <name type="common">Potato buckeye rot agent</name>
    <name type="synonym">Phytophthora parasitica</name>
    <dbReference type="NCBI Taxonomy" id="4792"/>
    <lineage>
        <taxon>Eukaryota</taxon>
        <taxon>Sar</taxon>
        <taxon>Stramenopiles</taxon>
        <taxon>Oomycota</taxon>
        <taxon>Peronosporales</taxon>
        <taxon>Peronosporaceae</taxon>
        <taxon>Phytophthora</taxon>
    </lineage>
</organism>
<reference key="1">
    <citation type="submission" date="1992-01" db="EMBL/GenBank/DDBJ databases">
        <title>HIS3 gene of Phytophthora parasitica.</title>
        <authorList>
            <person name="Baltrusch-Weiter M."/>
            <person name="Karlovsky P."/>
            <person name="Prell H.H."/>
        </authorList>
    </citation>
    <scope>NUCLEOTIDE SEQUENCE [GENOMIC DNA]</scope>
    <source>
        <strain>DSM 1829 / CBS 411.87</strain>
    </source>
</reference>
<accession>P28624</accession>
<dbReference type="EC" id="4.2.1.19"/>
<dbReference type="EMBL" id="Z11591">
    <property type="protein sequence ID" value="CAA77675.1"/>
    <property type="molecule type" value="Genomic_DNA"/>
</dbReference>
<dbReference type="PIR" id="S22199">
    <property type="entry name" value="S22199"/>
</dbReference>
<dbReference type="VEuPathDB" id="FungiDB:PPTG_19825"/>
<dbReference type="UniPathway" id="UPA00031">
    <property type="reaction ID" value="UER00011"/>
</dbReference>
<dbReference type="GO" id="GO:0004424">
    <property type="term" value="F:imidazoleglycerol-phosphate dehydratase activity"/>
    <property type="evidence" value="ECO:0007669"/>
    <property type="project" value="UniProtKB-EC"/>
</dbReference>
<dbReference type="GO" id="GO:0016791">
    <property type="term" value="F:phosphatase activity"/>
    <property type="evidence" value="ECO:0007669"/>
    <property type="project" value="InterPro"/>
</dbReference>
<dbReference type="GO" id="GO:0000105">
    <property type="term" value="P:L-histidine biosynthetic process"/>
    <property type="evidence" value="ECO:0007669"/>
    <property type="project" value="UniProtKB-UniPathway"/>
</dbReference>
<dbReference type="CDD" id="cd07914">
    <property type="entry name" value="IGPD"/>
    <property type="match status" value="1"/>
</dbReference>
<dbReference type="FunFam" id="3.30.230.40:FF:000001">
    <property type="entry name" value="Imidazoleglycerol-phosphate dehydratase HisB"/>
    <property type="match status" value="1"/>
</dbReference>
<dbReference type="FunFam" id="3.30.230.40:FF:000003">
    <property type="entry name" value="Imidazoleglycerol-phosphate dehydratase HisB"/>
    <property type="match status" value="1"/>
</dbReference>
<dbReference type="Gene3D" id="3.40.50.1000">
    <property type="entry name" value="HAD superfamily/HAD-like"/>
    <property type="match status" value="1"/>
</dbReference>
<dbReference type="Gene3D" id="3.30.230.40">
    <property type="entry name" value="Imidazole glycerol phosphate dehydratase, domain 1"/>
    <property type="match status" value="2"/>
</dbReference>
<dbReference type="Gene3D" id="1.10.150.240">
    <property type="entry name" value="Putative phosphatase, domain 2"/>
    <property type="match status" value="1"/>
</dbReference>
<dbReference type="HAMAP" id="MF_00076">
    <property type="entry name" value="HisB"/>
    <property type="match status" value="1"/>
</dbReference>
<dbReference type="InterPro" id="IPR036412">
    <property type="entry name" value="HAD-like_sf"/>
</dbReference>
<dbReference type="InterPro" id="IPR006439">
    <property type="entry name" value="HAD-SF_hydro_IA"/>
</dbReference>
<dbReference type="InterPro" id="IPR006438">
    <property type="entry name" value="HAD-SF_TIGR01548"/>
</dbReference>
<dbReference type="InterPro" id="IPR023214">
    <property type="entry name" value="HAD_sf"/>
</dbReference>
<dbReference type="InterPro" id="IPR006543">
    <property type="entry name" value="Histidinol-phos"/>
</dbReference>
<dbReference type="InterPro" id="IPR038494">
    <property type="entry name" value="IGPD_sf"/>
</dbReference>
<dbReference type="InterPro" id="IPR000807">
    <property type="entry name" value="ImidazoleglycerolP_deHydtase"/>
</dbReference>
<dbReference type="InterPro" id="IPR020565">
    <property type="entry name" value="ImidazoleglycerP_deHydtase_CS"/>
</dbReference>
<dbReference type="InterPro" id="IPR023198">
    <property type="entry name" value="PGP-like_dom2"/>
</dbReference>
<dbReference type="InterPro" id="IPR020568">
    <property type="entry name" value="Ribosomal_Su5_D2-typ_SF"/>
</dbReference>
<dbReference type="NCBIfam" id="TIGR01548">
    <property type="entry name" value="HAD-SF-IA-hyp1"/>
    <property type="match status" value="1"/>
</dbReference>
<dbReference type="NCBIfam" id="TIGR01549">
    <property type="entry name" value="HAD-SF-IA-v1"/>
    <property type="match status" value="1"/>
</dbReference>
<dbReference type="NCBIfam" id="TIGR01656">
    <property type="entry name" value="Histidinol-ppas"/>
    <property type="match status" value="1"/>
</dbReference>
<dbReference type="NCBIfam" id="NF002111">
    <property type="entry name" value="PRK00951.2-1"/>
    <property type="match status" value="1"/>
</dbReference>
<dbReference type="NCBIfam" id="NF002114">
    <property type="entry name" value="PRK00951.2-4"/>
    <property type="match status" value="1"/>
</dbReference>
<dbReference type="PANTHER" id="PTHR23133:SF2">
    <property type="entry name" value="IMIDAZOLEGLYCEROL-PHOSPHATE DEHYDRATASE"/>
    <property type="match status" value="1"/>
</dbReference>
<dbReference type="PANTHER" id="PTHR23133">
    <property type="entry name" value="IMIDAZOLEGLYCEROL-PHOSPHATE DEHYDRATASE HIS7"/>
    <property type="match status" value="1"/>
</dbReference>
<dbReference type="Pfam" id="PF00702">
    <property type="entry name" value="Hydrolase"/>
    <property type="match status" value="1"/>
</dbReference>
<dbReference type="Pfam" id="PF00475">
    <property type="entry name" value="IGPD"/>
    <property type="match status" value="1"/>
</dbReference>
<dbReference type="SFLD" id="SFLDG01129">
    <property type="entry name" value="C1.5:_HAD__Beta-PGM__Phosphata"/>
    <property type="match status" value="1"/>
</dbReference>
<dbReference type="SFLD" id="SFLDS00003">
    <property type="entry name" value="Haloacid_Dehalogenase"/>
    <property type="match status" value="1"/>
</dbReference>
<dbReference type="SUPFAM" id="SSF56784">
    <property type="entry name" value="HAD-like"/>
    <property type="match status" value="1"/>
</dbReference>
<dbReference type="SUPFAM" id="SSF54211">
    <property type="entry name" value="Ribosomal protein S5 domain 2-like"/>
    <property type="match status" value="2"/>
</dbReference>
<dbReference type="PROSITE" id="PS00954">
    <property type="entry name" value="IGP_DEHYDRATASE_1"/>
    <property type="match status" value="1"/>
</dbReference>
<dbReference type="PROSITE" id="PS00955">
    <property type="entry name" value="IGP_DEHYDRATASE_2"/>
    <property type="match status" value="1"/>
</dbReference>
<protein>
    <recommendedName>
        <fullName>Imidazoleglycerol-phosphate dehydratase</fullName>
        <shortName>IGPD</shortName>
        <ecNumber>4.2.1.19</ecNumber>
    </recommendedName>
</protein>
<keyword id="KW-0028">Amino-acid biosynthesis</keyword>
<keyword id="KW-0368">Histidine biosynthesis</keyword>
<keyword id="KW-0456">Lyase</keyword>
<keyword id="KW-0511">Multifunctional enzyme</keyword>
<comment type="catalytic activity">
    <reaction>
        <text>D-erythro-1-(imidazol-4-yl)glycerol 3-phosphate = 3-(imidazol-4-yl)-2-oxopropyl phosphate + H2O</text>
        <dbReference type="Rhea" id="RHEA:11040"/>
        <dbReference type="ChEBI" id="CHEBI:15377"/>
        <dbReference type="ChEBI" id="CHEBI:57766"/>
        <dbReference type="ChEBI" id="CHEBI:58278"/>
        <dbReference type="EC" id="4.2.1.19"/>
    </reaction>
</comment>
<comment type="pathway">
    <text>Amino-acid biosynthesis; L-histidine biosynthesis; L-histidine from 5-phospho-alpha-D-ribose 1-diphosphate: step 6/9.</text>
</comment>
<comment type="similarity">
    <text evidence="1">Belongs to the imidazoleglycerol-phosphate dehydratase family.</text>
</comment>